<reference key="1">
    <citation type="journal article" date="2008" name="FEMS Yeast Res.">
        <title>Comparative genome analysis of a Saccharomyces cerevisiae wine strain.</title>
        <authorList>
            <person name="Borneman A.R."/>
            <person name="Forgan A.H."/>
            <person name="Pretorius I.S."/>
            <person name="Chambers P.J."/>
        </authorList>
    </citation>
    <scope>NUCLEOTIDE SEQUENCE [LARGE SCALE GENOMIC DNA]</scope>
    <source>
        <strain>AWRI1631</strain>
    </source>
</reference>
<proteinExistence type="inferred from homology"/>
<keyword id="KW-0539">Nucleus</keyword>
<keyword id="KW-0597">Phosphoprotein</keyword>
<keyword id="KW-0677">Repeat</keyword>
<keyword id="KW-0819">tRNA processing</keyword>
<keyword id="KW-0853">WD repeat</keyword>
<organism>
    <name type="scientific">Saccharomyces cerevisiae (strain AWRI1631)</name>
    <name type="common">Baker's yeast</name>
    <dbReference type="NCBI Taxonomy" id="545124"/>
    <lineage>
        <taxon>Eukaryota</taxon>
        <taxon>Fungi</taxon>
        <taxon>Dikarya</taxon>
        <taxon>Ascomycota</taxon>
        <taxon>Saccharomycotina</taxon>
        <taxon>Saccharomycetes</taxon>
        <taxon>Saccharomycetales</taxon>
        <taxon>Saccharomycetaceae</taxon>
        <taxon>Saccharomyces</taxon>
    </lineage>
</organism>
<protein>
    <recommendedName>
        <fullName evidence="2">tRNA (guanine-N(7)-)-methyltransferase non-catalytic subunit TRM82</fullName>
    </recommendedName>
    <alternativeName>
        <fullName evidence="2">Transfer RNA methyltransferase 82</fullName>
    </alternativeName>
</protein>
<dbReference type="EMBL" id="ABSV01000467">
    <property type="protein sequence ID" value="EDZ73085.1"/>
    <property type="molecule type" value="Genomic_DNA"/>
</dbReference>
<dbReference type="SMR" id="B5VG60"/>
<dbReference type="UniPathway" id="UPA00989"/>
<dbReference type="Proteomes" id="UP000008988">
    <property type="component" value="Unassembled WGS sequence"/>
</dbReference>
<dbReference type="GO" id="GO:0005829">
    <property type="term" value="C:cytosol"/>
    <property type="evidence" value="ECO:0007669"/>
    <property type="project" value="TreeGrafter"/>
</dbReference>
<dbReference type="GO" id="GO:0005634">
    <property type="term" value="C:nucleus"/>
    <property type="evidence" value="ECO:0007669"/>
    <property type="project" value="UniProtKB-SubCell"/>
</dbReference>
<dbReference type="GO" id="GO:0043527">
    <property type="term" value="C:tRNA methyltransferase complex"/>
    <property type="evidence" value="ECO:0007669"/>
    <property type="project" value="TreeGrafter"/>
</dbReference>
<dbReference type="GO" id="GO:0106004">
    <property type="term" value="P:tRNA (guanine-N7)-methylation"/>
    <property type="evidence" value="ECO:0007669"/>
    <property type="project" value="UniProtKB-UniRule"/>
</dbReference>
<dbReference type="FunFam" id="2.130.10.10:FF:001177">
    <property type="entry name" value="tRNA (guanine-N(7)-)-methyltransferase non-catalytic subunit TRM82"/>
    <property type="match status" value="1"/>
</dbReference>
<dbReference type="Gene3D" id="2.130.10.10">
    <property type="entry name" value="YVTN repeat-like/Quinoprotein amine dehydrogenase"/>
    <property type="match status" value="1"/>
</dbReference>
<dbReference type="HAMAP" id="MF_03056">
    <property type="entry name" value="TRM82"/>
    <property type="match status" value="1"/>
</dbReference>
<dbReference type="InterPro" id="IPR028884">
    <property type="entry name" value="Trm82"/>
</dbReference>
<dbReference type="InterPro" id="IPR015943">
    <property type="entry name" value="WD40/YVTN_repeat-like_dom_sf"/>
</dbReference>
<dbReference type="InterPro" id="IPR036322">
    <property type="entry name" value="WD40_repeat_dom_sf"/>
</dbReference>
<dbReference type="InterPro" id="IPR001680">
    <property type="entry name" value="WD40_rpt"/>
</dbReference>
<dbReference type="PANTHER" id="PTHR16288:SF0">
    <property type="entry name" value="TRNA (GUANINE-N(7)-)-METHYLTRANSFERASE NON-CATALYTIC SUBUNIT WDR4"/>
    <property type="match status" value="1"/>
</dbReference>
<dbReference type="PANTHER" id="PTHR16288">
    <property type="entry name" value="WD40 REPEAT PROTEIN 4"/>
    <property type="match status" value="1"/>
</dbReference>
<dbReference type="SMART" id="SM00320">
    <property type="entry name" value="WD40"/>
    <property type="match status" value="3"/>
</dbReference>
<dbReference type="SUPFAM" id="SSF50978">
    <property type="entry name" value="WD40 repeat-like"/>
    <property type="match status" value="1"/>
</dbReference>
<dbReference type="PROSITE" id="PS50082">
    <property type="entry name" value="WD_REPEATS_2"/>
    <property type="match status" value="1"/>
</dbReference>
<dbReference type="PROSITE" id="PS50294">
    <property type="entry name" value="WD_REPEATS_REGION"/>
    <property type="match status" value="1"/>
</dbReference>
<accession>B5VG60</accession>
<sequence>MSVIHPLQNLLTSRDGSLVFAIIKNCILSFKYQSPNHWEFAGKWSDDFDKIQESRNTTAKEQQGQSSENENENKKLKSNKGDSIKRTAAKVPSPGLGAPPIYSYIRNLRLTSDESRLIACADSDKSLLVFDVDKTSKNVLKLRKRFCFSKRPNAISIAEDDTTVIIADKFGDVYSIDINSIPEEKFTQEPILGHVSMLTDVHLIKDSDGHQFIITSDRDEHIKISHYPQCFIVDKWLFGHKHFVSSICCGKDYLLLSAGGDDKIFAWDWKTGKNLSTFDYSSLIKPYLNDQHLAPPRFQNENNDIIEFAVSKIIKSKNLPFVAFFVEATKCIIILEMSEKQKGDLALKQIITFPYNVISLSAHNDEFQVTLDNKESSGVQKNFAKFIEYNLNENSFVVNNEKSNEFDSAIIQSVQGDSNLVTKKEEIYPLYNVSSLRKHGEHYS</sequence>
<comment type="function">
    <text evidence="2">Required for the formation of N(7)-methylguanine at position 46 (m7G46) in tRNA, a modification required to maintain stability of tRNAs; its absence resulting in tRNA decay. In the complex, it is required to stabilize and induce conformational changes of the catalytic subunit.</text>
</comment>
<comment type="pathway">
    <text evidence="2">tRNA modification; N(7)-methylguanine-tRNA biosynthesis.</text>
</comment>
<comment type="subunit">
    <text evidence="2">Forms a heterodimer with the catalytic subunit TRM8.</text>
</comment>
<comment type="subcellular location">
    <subcellularLocation>
        <location evidence="2">Nucleus</location>
    </subcellularLocation>
</comment>
<comment type="similarity">
    <text evidence="2">Belongs to the WD repeat TRM82 family.</text>
</comment>
<feature type="chain" id="PRO_0000370530" description="tRNA (guanine-N(7)-)-methyltransferase non-catalytic subunit TRM82">
    <location>
        <begin position="1"/>
        <end position="444"/>
    </location>
</feature>
<feature type="repeat" description="WD 1">
    <location>
        <begin position="1"/>
        <end position="47"/>
    </location>
</feature>
<feature type="repeat" description="WD 2">
    <location>
        <begin position="48"/>
        <end position="99"/>
    </location>
</feature>
<feature type="repeat" description="WD 3">
    <location>
        <begin position="100"/>
        <end position="147"/>
    </location>
</feature>
<feature type="repeat" description="WD 4">
    <location>
        <begin position="148"/>
        <end position="192"/>
    </location>
</feature>
<feature type="repeat" description="WD 5">
    <location>
        <begin position="193"/>
        <end position="237"/>
    </location>
</feature>
<feature type="repeat" description="WD 6">
    <location>
        <begin position="238"/>
        <end position="279"/>
    </location>
</feature>
<feature type="repeat" description="WD 7">
    <location>
        <begin position="308"/>
        <end position="354"/>
    </location>
</feature>
<feature type="region of interest" description="Disordered" evidence="3">
    <location>
        <begin position="55"/>
        <end position="92"/>
    </location>
</feature>
<feature type="compositionally biased region" description="Basic and acidic residues" evidence="3">
    <location>
        <begin position="71"/>
        <end position="85"/>
    </location>
</feature>
<feature type="modified residue" description="Phosphoserine" evidence="1">
    <location>
        <position position="93"/>
    </location>
</feature>
<name>TRM82_YEAS6</name>
<evidence type="ECO:0000250" key="1">
    <source>
        <dbReference type="UniProtKB" id="Q03774"/>
    </source>
</evidence>
<evidence type="ECO:0000255" key="2">
    <source>
        <dbReference type="HAMAP-Rule" id="MF_03056"/>
    </source>
</evidence>
<evidence type="ECO:0000256" key="3">
    <source>
        <dbReference type="SAM" id="MobiDB-lite"/>
    </source>
</evidence>
<gene>
    <name evidence="2" type="primary">TRM82</name>
    <name type="ORF">AWRI1631_43860</name>
</gene>